<sequence length="841" mass="91227">MPLRRFSPGLKAQFAFGMVFLFVQPDASAADISAQQIGGVIIPQAFSQALQDGMSVPLYIHLAGSQGRQDDQRIGSAFIWLDDGQLRIRKIQLEESEDNASVSEQTRQQLMALANAPFNEALTIPLTDNAQLDLSLRQLLLQLVVKREALGTVLRSRSEDIGQSSVNTLSSNLSYNFGIYNNQLRNGGSNTSSYLSLNNVTALREHHVVLDGSLYGIGSGQQDSELYKAMYERDFAGHRFAGGTLDTWNLQSLGPMTAISAGKIYGLSWGNQASSTIFDSSQSATPVIAFLPAAGEVHLTRDGRLLSVQNFTMGNHEVDTRGLPYGIYDVEVEVIVNGRVISKRTQRVNKLFSRGRGVGAPLAWQVWGGSFHMDRWSENGKKTRPAKESWLAGASTSGSLSTLSWAATGYGYDNQAVGETRLTLPLGGAINVNLQNMLASDSSWSSIGSISATLPGGFSSLWVNQEKTRIGNQLRRSDADNRAIGGTLNLNSLWSKLGTFSISYNDDRRYNSHYYTADYYQNVYSGTFGSLGLRAGIQRYNNGDSNANTGKYIALDLSLPLGNWFSAGMTHQNGYTMANLSARKQFDEGTIRTVGANLSRAISGDTGDDKTLSGGAYAQFDARYASGTLNVNSAADGYVNTNLTANGSVGWQGKNIAASGRTDGNAGVIFNTGLEDDGQISAKINGRIFPLNGKRNYLPLSPYGRYEVELQNSKNSLDSYDIVSGRKSHLTLYPGNVAVIEPEVKQMVTVSGRIRAEDGTLLANARINNHIGRTRTDENGEFVMDVDKKYPTIDFRYSGNKTCEVALELNQARGAVWVGDVVCSGLSSWAAVTQTGEENES</sequence>
<name>ECPC_ECO57</name>
<gene>
    <name type="primary">ecpC</name>
    <name type="synonym">yagX</name>
    <name type="ordered locus">Z0358</name>
    <name type="ordered locus">ECs0321</name>
</gene>
<accession>Q8X6I4</accession>
<accession>Q7AHC2</accession>
<proteinExistence type="evidence at transcript level"/>
<reference key="1">
    <citation type="journal article" date="2001" name="DNA Res.">
        <title>Complete genome sequence of enterohemorrhagic Escherichia coli O157:H7 and genomic comparison with a laboratory strain K-12.</title>
        <authorList>
            <person name="Hayashi T."/>
            <person name="Makino K."/>
            <person name="Ohnishi M."/>
            <person name="Kurokawa K."/>
            <person name="Ishii K."/>
            <person name="Yokoyama K."/>
            <person name="Han C.-G."/>
            <person name="Ohtsubo E."/>
            <person name="Nakayama K."/>
            <person name="Murata T."/>
            <person name="Tanaka M."/>
            <person name="Tobe T."/>
            <person name="Iida T."/>
            <person name="Takami H."/>
            <person name="Honda T."/>
            <person name="Sasakawa C."/>
            <person name="Ogasawara N."/>
            <person name="Yasunaga T."/>
            <person name="Kuhara S."/>
            <person name="Shiba T."/>
            <person name="Hattori M."/>
            <person name="Shinagawa H."/>
        </authorList>
    </citation>
    <scope>NUCLEOTIDE SEQUENCE [LARGE SCALE GENOMIC DNA]</scope>
    <source>
        <strain>O157:H7 / Sakai / RIMD 0509952 / EHEC</strain>
    </source>
</reference>
<reference key="2">
    <citation type="journal article" date="2001" name="Nature">
        <title>Genome sequence of enterohaemorrhagic Escherichia coli O157:H7.</title>
        <authorList>
            <person name="Perna N.T."/>
            <person name="Plunkett G. III"/>
            <person name="Burland V."/>
            <person name="Mau B."/>
            <person name="Glasner J.D."/>
            <person name="Rose D.J."/>
            <person name="Mayhew G.F."/>
            <person name="Evans P.S."/>
            <person name="Gregor J."/>
            <person name="Kirkpatrick H.A."/>
            <person name="Posfai G."/>
            <person name="Hackett J."/>
            <person name="Klink S."/>
            <person name="Boutin A."/>
            <person name="Shao Y."/>
            <person name="Miller L."/>
            <person name="Grotbeck E.J."/>
            <person name="Davis N.W."/>
            <person name="Lim A."/>
            <person name="Dimalanta E.T."/>
            <person name="Potamousis K."/>
            <person name="Apodaca J."/>
            <person name="Anantharaman T.S."/>
            <person name="Lin J."/>
            <person name="Yen G."/>
            <person name="Schwartz D.C."/>
            <person name="Welch R.A."/>
            <person name="Blattner F.R."/>
        </authorList>
    </citation>
    <scope>NUCLEOTIDE SEQUENCE [LARGE SCALE GENOMIC DNA]</scope>
    <source>
        <strain>O157:H7 / EDL933 / ATCC 700927 / EHEC</strain>
    </source>
</reference>
<reference key="3">
    <citation type="journal article" date="2012" name="J. Bacteriol.">
        <title>Transcriptional regulation of the ecp operon by EcpR, IHF, and H-NS in attaching and effacing Escherichia coli.</title>
        <authorList>
            <person name="Martinez-Santos V.I."/>
            <person name="Medrano-Lopez A."/>
            <person name="Saldana Z."/>
            <person name="Giron J.A."/>
            <person name="Puente J.L."/>
        </authorList>
    </citation>
    <scope>INDUCTION</scope>
    <source>
        <strain>O157:H7 / EDL933 / ATCC 700927 / EHEC</strain>
    </source>
</reference>
<evidence type="ECO:0000250" key="1"/>
<evidence type="ECO:0000255" key="2"/>
<evidence type="ECO:0000269" key="3">
    <source>
    </source>
</evidence>
<evidence type="ECO:0000305" key="4"/>
<feature type="signal peptide" evidence="2">
    <location>
        <begin position="1"/>
        <end position="29"/>
    </location>
</feature>
<feature type="chain" id="PRO_0000429531" description="Probable outer membrane usher protein EcpC">
    <location>
        <begin position="30"/>
        <end position="841"/>
    </location>
</feature>
<comment type="function">
    <text evidence="1">Part of the ecpRABCDE operon, which encodes the E.coli common pilus (ECP). ECP is found in both commensal and pathogenic strains and plays a dual role in early-stage biofilm development and host cell recognition (By similarity).</text>
</comment>
<comment type="induction">
    <text evidence="3">Negatively regulated by H-NS. Positively regulated by IHF and EcpR.</text>
</comment>
<comment type="similarity">
    <text evidence="4">Belongs to the EcpC/MatD family.</text>
</comment>
<organism>
    <name type="scientific">Escherichia coli O157:H7</name>
    <dbReference type="NCBI Taxonomy" id="83334"/>
    <lineage>
        <taxon>Bacteria</taxon>
        <taxon>Pseudomonadati</taxon>
        <taxon>Pseudomonadota</taxon>
        <taxon>Gammaproteobacteria</taxon>
        <taxon>Enterobacterales</taxon>
        <taxon>Enterobacteriaceae</taxon>
        <taxon>Escherichia</taxon>
    </lineage>
</organism>
<dbReference type="EMBL" id="AE005174">
    <property type="protein sequence ID" value="AAG54616.1"/>
    <property type="molecule type" value="Genomic_DNA"/>
</dbReference>
<dbReference type="EMBL" id="BA000007">
    <property type="protein sequence ID" value="BAB33744.1"/>
    <property type="molecule type" value="Genomic_DNA"/>
</dbReference>
<dbReference type="PIR" id="A90669">
    <property type="entry name" value="A90669"/>
</dbReference>
<dbReference type="PIR" id="D85519">
    <property type="entry name" value="D85519"/>
</dbReference>
<dbReference type="RefSeq" id="NP_308348.1">
    <property type="nucleotide sequence ID" value="NC_002695.1"/>
</dbReference>
<dbReference type="RefSeq" id="WP_001131063.1">
    <property type="nucleotide sequence ID" value="NZ_SEKU01000045.1"/>
</dbReference>
<dbReference type="SMR" id="Q8X6I4"/>
<dbReference type="STRING" id="155864.Z0358"/>
<dbReference type="GeneID" id="914420"/>
<dbReference type="KEGG" id="ece:Z0358"/>
<dbReference type="KEGG" id="ecs:ECs_0321"/>
<dbReference type="PATRIC" id="fig|386585.9.peg.415"/>
<dbReference type="eggNOG" id="COG3188">
    <property type="taxonomic scope" value="Bacteria"/>
</dbReference>
<dbReference type="HOGENOM" id="CLU_017537_0_0_6"/>
<dbReference type="OMA" id="IYGASWG"/>
<dbReference type="Proteomes" id="UP000000558">
    <property type="component" value="Chromosome"/>
</dbReference>
<dbReference type="Proteomes" id="UP000002519">
    <property type="component" value="Chromosome"/>
</dbReference>
<dbReference type="InterPro" id="IPR008969">
    <property type="entry name" value="CarboxyPept-like_regulatory"/>
</dbReference>
<dbReference type="InterPro" id="IPR031917">
    <property type="entry name" value="Pilus_assem_C"/>
</dbReference>
<dbReference type="InterPro" id="IPR032636">
    <property type="entry name" value="Pilus_assem_E-set-like_dom"/>
</dbReference>
<dbReference type="Pfam" id="PF15976">
    <property type="entry name" value="CooC_C"/>
    <property type="match status" value="1"/>
</dbReference>
<dbReference type="Pfam" id="PF16967">
    <property type="entry name" value="TcfC"/>
    <property type="match status" value="1"/>
</dbReference>
<dbReference type="SUPFAM" id="SSF49464">
    <property type="entry name" value="Carboxypeptidase regulatory domain-like"/>
    <property type="match status" value="1"/>
</dbReference>
<keyword id="KW-1029">Fimbrium biogenesis</keyword>
<keyword id="KW-1185">Reference proteome</keyword>
<keyword id="KW-0732">Signal</keyword>
<keyword id="KW-0813">Transport</keyword>
<protein>
    <recommendedName>
        <fullName>Probable outer membrane usher protein EcpC</fullName>
    </recommendedName>
</protein>